<keyword id="KW-0067">ATP-binding</keyword>
<keyword id="KW-0175">Coiled coil</keyword>
<keyword id="KW-0378">Hydrolase</keyword>
<keyword id="KW-0418">Kinase</keyword>
<keyword id="KW-0547">Nucleotide-binding</keyword>
<keyword id="KW-0904">Protein phosphatase</keyword>
<keyword id="KW-1185">Reference proteome</keyword>
<keyword id="KW-0723">Serine/threonine-protein kinase</keyword>
<keyword id="KW-0808">Transferase</keyword>
<sequence>MERSRKHRALSITPHKQKQYMLDIEDNNVSTSSLTTTTTTTTTTTTTTSTTHNHESNERSNQLLESLIVLKEKIKLLDSTEKNHCITQGGITILIQCLCYCGKNSIKNDVIIEICQQLIDNSHDASRLFCKQIISHLYNDIECIGISDVLTKIISFYPLRSIFIEDLCIPKLLEIYYKCSLALSNIKFKVDPSIHINSTPVVQQSQQQLSNSSSSIPTSTSSPLQSSSSSSSSSATTASTASTTSSTTSNSSPTKTLGKQQQKQNSQQQQQQQQQQQQQQQQQQQQQQQQQQQQQQQQQQQKLNIHEFQSIQIPCWDDGVPPPPPQGFTFENLLTSVPIPRPPLFQQHQQSTTSNNNNNTIIQQSNTKSGDVTTPTSILSPISTITNNNNNVNSTNITPAPTPNLPSSVTSPISTSTNPPSNNPKPTSIGQIQSLHYHNPSLYQTPPLFNRNRGNNNNNNNDSNTSSPMDSPLISSTVASLNSNNSTAAATTTTTTTISTPTISTPSITSRVPPLPLSNSINNNNVNQIHPNNTPNSATSGGSISKVPMLSMGGIGGGGGGGSGGGGISKSIVPRLNLPVRVENSTRNTRSSRRRDDASNSTRSHQGELKIETSASKELSDLAIKLGETYMTADLTALISYKQAIESHKQSKRSIPSRRYDIPPISSKNTAALSMVNQQQSSFSELNLYKVRCNILKTLISSTSNNLMLLQYGNNPINILYSESILLHKGIIPSDKDHLTLFYKLASHWSDYVEYIHRNRWRDVTKGMGLERKASFRKKLDLLLWRINSSISNMLETFTFDDMEYQLCILSEYMENCPSRILSSQVVDVCIESLLKVKHSIFRGPITSDRVKDIHIIHYLLTVFDEIIKQNKSSPINDLFISIFLERDETFQFIKQYTIQILTNESIEREFSKCYPNDQNKIRLTEFRCRSIKHFSICVKMLKFKFKKQQENKLYNQHNCNNNNINNINNNNNNNNNNNNNNNNNNNNNNNNNNSNNSGSSGNLANNLNTPTSSQTNSSSTTTAGTNPTSTSTSSTTTGTNSTTTTTNENEIPDLLKKMEFLLLPQGNGVILPFLQSNNFFTHFNVKKQMLKFLNHVFLFKKNPFTKKKLYIDSYISYIYISFIKLYNNYIFDQATLTLCRLFLNILISFSVNKNDKISMKFYQLRTMDFLVREVNLEYEIKQNKDQFLKPLSSIPFFANSSDDTSSSSSTSSSLSLSTTTTTTTTTTTKTTTTTNTNSTTPIKTGGPPTIPKLATPGTKLNLGLNLSGITKTDNSSNNNNTSSPPVIPKLSLQPKIDSGSSTSSPSTLISTPSTLASTPPTTGVSSNPLIKPKFSLNLSSISKGSPASTSSSNLTTTTISSSSSSSNSTTTSLTTVPASTIIDSTSSTSTSTTTTTIGSVSTEPPLPAPPKPKFSLNLSSVSKTGQASTSTPNLLNLKNIPTTTNNSNSTTTTTTTTPTGKPQFSLNLSSLSKSSSSTETVPPSQPNQPISKPIIKSLNLGSISKGGSTTTTTTTTTPPPINNSNNTIASNNNEINLPKLSNSPINISSSKPPILIPKLVLPAIKIRSEEDTKQAGTGVLSSIEQKIDPQDPKFQLVLDNPSQSLTPSDRDSEQMIEPTENEIFNENQRYQLERNNRKLYHDRDLHISLLQLIFSLLLNSNQTLEHLYSDQFPIVAKKLNVPFILHLHINHQDNEKIIPELTKRTHEMGPNHFRILKLLFSRLYHSNLFKDLKRVAKGAYGTVYKGTLGNDEGLEIAVKLMPVPKTIHDRCVLYDIFTEILIMDTFRSDSRGCHMFDYGVDGENYWIVMKSYKCSLKEWRLKQTLPFLELLPLLLNIFTNVLQSVQFLGDHKINHFDIKCDNFLVHPLKKGTIEEDFWNQPTNDPNFAVCLADWGEAKVYTQDVEGYTTRNRGTEFIKSPEMLTIAYASQKTRENFDRRKKVGSNTASDVWSLGCLFYELLTGDFLFYDDDWVKFFIRVTQPGQELITPERKSKVANIPAILDYLDYVFIRDPFYRPTLRDLLTKFIAIKPTILSQWEQLKKKLDGHMSNQMNTVEKPKQYYNGGDGTSYKAKSIKFTGHYTPGRFLPHSYNANNPIKVGSLMVDGDKSTLEMPYEAAEFPEHRFYMDRPSKVASFMYISSFNPSMNKNMLINEYQITHIINCTGSPNAFPDHFEYLHLQLHDQPHQDITQSLSLAFDFIRDAIVHHGKVLICSDKGVSRSSALAIGYFMDSRSISYFEAFILVRDCRYIISPNTGFVEQLCRWGKQRRNFKGLSEWGGGETNSTLFQCLCGACSFTLLTPFDNRKYSNPKKCCCTPGSDLDCPNHIIGCSNFLGDMKKLHGYNNLNYLAWGYTNIINVVGDYERSSIEIVYNNNSNNINNNNNNNSNNSKSKQQQQQQQNQNIQQNNDWNLFKCKFCHFLTCAISKSTSGVNENLIAVVTNQRTNYFPSTLK</sequence>
<name>Y7071_DICDI</name>
<dbReference type="EC" id="2.7.11.1"/>
<dbReference type="EMBL" id="AAFI02000019">
    <property type="protein sequence ID" value="EAL69037.2"/>
    <property type="molecule type" value="Genomic_DNA"/>
</dbReference>
<dbReference type="RefSeq" id="XP_642924.2">
    <property type="nucleotide sequence ID" value="XM_637832.2"/>
</dbReference>
<dbReference type="SMR" id="Q550K8"/>
<dbReference type="STRING" id="44689.Q550K8"/>
<dbReference type="GlyGen" id="Q550K8">
    <property type="glycosylation" value="2 sites"/>
</dbReference>
<dbReference type="PaxDb" id="44689-DDB0231326"/>
<dbReference type="EnsemblProtists" id="EAL69037">
    <property type="protein sequence ID" value="EAL69037"/>
    <property type="gene ID" value="DDB_G0277071"/>
</dbReference>
<dbReference type="GeneID" id="8620793"/>
<dbReference type="KEGG" id="ddi:DDB_G0277071"/>
<dbReference type="dictyBase" id="DDB_G0277071">
    <property type="gene designation" value="dupA"/>
</dbReference>
<dbReference type="VEuPathDB" id="AmoebaDB:DDB_G0277071"/>
<dbReference type="eggNOG" id="KOG0578">
    <property type="taxonomic scope" value="Eukaryota"/>
</dbReference>
<dbReference type="eggNOG" id="KOG1716">
    <property type="taxonomic scope" value="Eukaryota"/>
</dbReference>
<dbReference type="HOGENOM" id="CLU_228878_0_0_1"/>
<dbReference type="InParanoid" id="Q550K8"/>
<dbReference type="OMA" id="FTEILIM"/>
<dbReference type="PRO" id="PR:Q550K8"/>
<dbReference type="Proteomes" id="UP000002195">
    <property type="component" value="Chromosome 2"/>
</dbReference>
<dbReference type="GO" id="GO:0005524">
    <property type="term" value="F:ATP binding"/>
    <property type="evidence" value="ECO:0007669"/>
    <property type="project" value="UniProtKB-KW"/>
</dbReference>
<dbReference type="GO" id="GO:0033549">
    <property type="term" value="F:MAP kinase phosphatase activity"/>
    <property type="evidence" value="ECO:0000314"/>
    <property type="project" value="dictyBase"/>
</dbReference>
<dbReference type="GO" id="GO:0106310">
    <property type="term" value="F:protein serine kinase activity"/>
    <property type="evidence" value="ECO:0007669"/>
    <property type="project" value="RHEA"/>
</dbReference>
<dbReference type="GO" id="GO:0004674">
    <property type="term" value="F:protein serine/threonine kinase activity"/>
    <property type="evidence" value="ECO:0007669"/>
    <property type="project" value="UniProtKB-KW"/>
</dbReference>
<dbReference type="GO" id="GO:0031152">
    <property type="term" value="P:aggregation involved in sorocarp development"/>
    <property type="evidence" value="ECO:0000315"/>
    <property type="project" value="dictyBase"/>
</dbReference>
<dbReference type="GO" id="GO:0070373">
    <property type="term" value="P:negative regulation of ERK1 and ERK2 cascade"/>
    <property type="evidence" value="ECO:0000315"/>
    <property type="project" value="dictyBase"/>
</dbReference>
<dbReference type="GO" id="GO:1900424">
    <property type="term" value="P:regulation of defense response to bacterium"/>
    <property type="evidence" value="ECO:0000270"/>
    <property type="project" value="dictyBase"/>
</dbReference>
<dbReference type="GO" id="GO:0010468">
    <property type="term" value="P:regulation of gene expression"/>
    <property type="evidence" value="ECO:0000315"/>
    <property type="project" value="dictyBase"/>
</dbReference>
<dbReference type="CDD" id="cd14498">
    <property type="entry name" value="DSP"/>
    <property type="match status" value="1"/>
</dbReference>
<dbReference type="FunFam" id="1.10.510.10:FF:001238">
    <property type="entry name" value="Nucleotide exchange factor RasGEF P family protein"/>
    <property type="match status" value="1"/>
</dbReference>
<dbReference type="FunFam" id="3.90.190.10:FF:000405">
    <property type="entry name" value="Probable serine/threonine-protein kinase DDB_G0277071"/>
    <property type="match status" value="1"/>
</dbReference>
<dbReference type="Gene3D" id="3.30.200.20">
    <property type="entry name" value="Phosphorylase Kinase, domain 1"/>
    <property type="match status" value="1"/>
</dbReference>
<dbReference type="Gene3D" id="3.90.190.10">
    <property type="entry name" value="Protein tyrosine phosphatase superfamily"/>
    <property type="match status" value="1"/>
</dbReference>
<dbReference type="Gene3D" id="1.10.510.10">
    <property type="entry name" value="Transferase(Phosphotransferase) domain 1"/>
    <property type="match status" value="1"/>
</dbReference>
<dbReference type="InterPro" id="IPR000340">
    <property type="entry name" value="Dual-sp_phosphatase_cat-dom"/>
</dbReference>
<dbReference type="InterPro" id="IPR011009">
    <property type="entry name" value="Kinase-like_dom_sf"/>
</dbReference>
<dbReference type="InterPro" id="IPR029021">
    <property type="entry name" value="Prot-tyrosine_phosphatase-like"/>
</dbReference>
<dbReference type="InterPro" id="IPR000719">
    <property type="entry name" value="Prot_kinase_dom"/>
</dbReference>
<dbReference type="InterPro" id="IPR008271">
    <property type="entry name" value="Ser/Thr_kinase_AS"/>
</dbReference>
<dbReference type="InterPro" id="IPR020422">
    <property type="entry name" value="TYR_PHOSPHATASE_DUAL_dom"/>
</dbReference>
<dbReference type="PANTHER" id="PTHR46381">
    <property type="entry name" value="MKPA PROTEIN"/>
    <property type="match status" value="1"/>
</dbReference>
<dbReference type="PANTHER" id="PTHR46381:SF3">
    <property type="entry name" value="SERINE_THREONINE-PROTEIN KINASE DDB_G0277071-RELATED"/>
    <property type="match status" value="1"/>
</dbReference>
<dbReference type="Pfam" id="PF00782">
    <property type="entry name" value="DSPc"/>
    <property type="match status" value="1"/>
</dbReference>
<dbReference type="Pfam" id="PF00069">
    <property type="entry name" value="Pkinase"/>
    <property type="match status" value="1"/>
</dbReference>
<dbReference type="SMART" id="SM00195">
    <property type="entry name" value="DSPc"/>
    <property type="match status" value="1"/>
</dbReference>
<dbReference type="SMART" id="SM00220">
    <property type="entry name" value="S_TKc"/>
    <property type="match status" value="1"/>
</dbReference>
<dbReference type="SUPFAM" id="SSF52799">
    <property type="entry name" value="(Phosphotyrosine protein) phosphatases II"/>
    <property type="match status" value="1"/>
</dbReference>
<dbReference type="SUPFAM" id="SSF56112">
    <property type="entry name" value="Protein kinase-like (PK-like)"/>
    <property type="match status" value="1"/>
</dbReference>
<dbReference type="PROSITE" id="PS50011">
    <property type="entry name" value="PROTEIN_KINASE_DOM"/>
    <property type="match status" value="1"/>
</dbReference>
<dbReference type="PROSITE" id="PS00108">
    <property type="entry name" value="PROTEIN_KINASE_ST"/>
    <property type="match status" value="1"/>
</dbReference>
<dbReference type="PROSITE" id="PS50054">
    <property type="entry name" value="TYR_PHOSPHATASE_DUAL"/>
    <property type="match status" value="1"/>
</dbReference>
<protein>
    <recommendedName>
        <fullName>Probable serine/threonine-protein kinase DDB_G0277071</fullName>
        <ecNumber>2.7.11.1</ecNumber>
    </recommendedName>
</protein>
<evidence type="ECO:0000255" key="1"/>
<evidence type="ECO:0000255" key="2">
    <source>
        <dbReference type="PROSITE-ProRule" id="PRU00159"/>
    </source>
</evidence>
<evidence type="ECO:0000255" key="3">
    <source>
        <dbReference type="PROSITE-ProRule" id="PRU00160"/>
    </source>
</evidence>
<evidence type="ECO:0000255" key="4">
    <source>
        <dbReference type="PROSITE-ProRule" id="PRU10027"/>
    </source>
</evidence>
<evidence type="ECO:0000256" key="5">
    <source>
        <dbReference type="SAM" id="MobiDB-lite"/>
    </source>
</evidence>
<comment type="catalytic activity">
    <reaction>
        <text>L-seryl-[protein] + ATP = O-phospho-L-seryl-[protein] + ADP + H(+)</text>
        <dbReference type="Rhea" id="RHEA:17989"/>
        <dbReference type="Rhea" id="RHEA-COMP:9863"/>
        <dbReference type="Rhea" id="RHEA-COMP:11604"/>
        <dbReference type="ChEBI" id="CHEBI:15378"/>
        <dbReference type="ChEBI" id="CHEBI:29999"/>
        <dbReference type="ChEBI" id="CHEBI:30616"/>
        <dbReference type="ChEBI" id="CHEBI:83421"/>
        <dbReference type="ChEBI" id="CHEBI:456216"/>
        <dbReference type="EC" id="2.7.11.1"/>
    </reaction>
</comment>
<comment type="catalytic activity">
    <reaction>
        <text>L-threonyl-[protein] + ATP = O-phospho-L-threonyl-[protein] + ADP + H(+)</text>
        <dbReference type="Rhea" id="RHEA:46608"/>
        <dbReference type="Rhea" id="RHEA-COMP:11060"/>
        <dbReference type="Rhea" id="RHEA-COMP:11605"/>
        <dbReference type="ChEBI" id="CHEBI:15378"/>
        <dbReference type="ChEBI" id="CHEBI:30013"/>
        <dbReference type="ChEBI" id="CHEBI:30616"/>
        <dbReference type="ChEBI" id="CHEBI:61977"/>
        <dbReference type="ChEBI" id="CHEBI:456216"/>
        <dbReference type="EC" id="2.7.11.1"/>
    </reaction>
</comment>
<comment type="domain">
    <text>The tyrosine-protein phosphatase domain is predicted to be catalytically inactive.</text>
</comment>
<comment type="similarity">
    <text evidence="2">Belongs to the protein kinase superfamily. Ser/Thr protein kinase family.</text>
</comment>
<proteinExistence type="inferred from homology"/>
<organism>
    <name type="scientific">Dictyostelium discoideum</name>
    <name type="common">Social amoeba</name>
    <dbReference type="NCBI Taxonomy" id="44689"/>
    <lineage>
        <taxon>Eukaryota</taxon>
        <taxon>Amoebozoa</taxon>
        <taxon>Evosea</taxon>
        <taxon>Eumycetozoa</taxon>
        <taxon>Dictyostelia</taxon>
        <taxon>Dictyosteliales</taxon>
        <taxon>Dictyosteliaceae</taxon>
        <taxon>Dictyostelium</taxon>
    </lineage>
</organism>
<accession>Q550K8</accession>
<accession>Q86B02</accession>
<feature type="chain" id="PRO_0000362061" description="Probable serine/threonine-protein kinase DDB_G0277071">
    <location>
        <begin position="1"/>
        <end position="2454"/>
    </location>
</feature>
<feature type="domain" description="Protein kinase" evidence="2">
    <location>
        <begin position="1730"/>
        <end position="2034"/>
    </location>
</feature>
<feature type="domain" description="Tyrosine-protein phosphatase" evidence="3">
    <location>
        <begin position="2130"/>
        <end position="2271"/>
    </location>
</feature>
<feature type="region of interest" description="Disordered" evidence="5">
    <location>
        <begin position="31"/>
        <end position="57"/>
    </location>
</feature>
<feature type="region of interest" description="Disordered" evidence="5">
    <location>
        <begin position="206"/>
        <end position="265"/>
    </location>
</feature>
<feature type="region of interest" description="Disordered" evidence="5">
    <location>
        <begin position="340"/>
        <end position="612"/>
    </location>
</feature>
<feature type="region of interest" description="Disordered" evidence="5">
    <location>
        <begin position="963"/>
        <end position="1051"/>
    </location>
</feature>
<feature type="region of interest" description="Disordered" evidence="5">
    <location>
        <begin position="1201"/>
        <end position="1330"/>
    </location>
</feature>
<feature type="region of interest" description="Disordered" evidence="5">
    <location>
        <begin position="1342"/>
        <end position="1528"/>
    </location>
</feature>
<feature type="region of interest" description="Disordered" evidence="5">
    <location>
        <begin position="2379"/>
        <end position="2404"/>
    </location>
</feature>
<feature type="coiled-coil region" evidence="1">
    <location>
        <begin position="259"/>
        <end position="307"/>
    </location>
</feature>
<feature type="compositionally biased region" description="Low complexity" evidence="5">
    <location>
        <begin position="31"/>
        <end position="51"/>
    </location>
</feature>
<feature type="compositionally biased region" description="Low complexity" evidence="5">
    <location>
        <begin position="346"/>
        <end position="399"/>
    </location>
</feature>
<feature type="compositionally biased region" description="Low complexity" evidence="5">
    <location>
        <begin position="406"/>
        <end position="428"/>
    </location>
</feature>
<feature type="compositionally biased region" description="Polar residues" evidence="5">
    <location>
        <begin position="429"/>
        <end position="444"/>
    </location>
</feature>
<feature type="compositionally biased region" description="Low complexity" evidence="5">
    <location>
        <begin position="450"/>
        <end position="461"/>
    </location>
</feature>
<feature type="compositionally biased region" description="Low complexity" evidence="5">
    <location>
        <begin position="475"/>
        <end position="536"/>
    </location>
</feature>
<feature type="compositionally biased region" description="Gly residues" evidence="5">
    <location>
        <begin position="553"/>
        <end position="568"/>
    </location>
</feature>
<feature type="compositionally biased region" description="Low complexity" evidence="5">
    <location>
        <begin position="963"/>
        <end position="1048"/>
    </location>
</feature>
<feature type="compositionally biased region" description="Low complexity" evidence="5">
    <location>
        <begin position="1201"/>
        <end position="1248"/>
    </location>
</feature>
<feature type="compositionally biased region" description="Low complexity" evidence="5">
    <location>
        <begin position="1275"/>
        <end position="1284"/>
    </location>
</feature>
<feature type="compositionally biased region" description="Low complexity" evidence="5">
    <location>
        <begin position="1299"/>
        <end position="1324"/>
    </location>
</feature>
<feature type="compositionally biased region" description="Low complexity" evidence="5">
    <location>
        <begin position="1346"/>
        <end position="1403"/>
    </location>
</feature>
<feature type="compositionally biased region" description="Polar residues" evidence="5">
    <location>
        <begin position="1417"/>
        <end position="1441"/>
    </location>
</feature>
<feature type="compositionally biased region" description="Low complexity" evidence="5">
    <location>
        <begin position="1442"/>
        <end position="1478"/>
    </location>
</feature>
<feature type="compositionally biased region" description="Polar residues" evidence="5">
    <location>
        <begin position="1479"/>
        <end position="1491"/>
    </location>
</feature>
<feature type="compositionally biased region" description="Low complexity" evidence="5">
    <location>
        <begin position="1509"/>
        <end position="1528"/>
    </location>
</feature>
<feature type="active site" description="Proton acceptor" evidence="2 4">
    <location>
        <position position="1858"/>
    </location>
</feature>
<feature type="binding site" evidence="2">
    <location>
        <begin position="1736"/>
        <end position="1744"/>
    </location>
    <ligand>
        <name>ATP</name>
        <dbReference type="ChEBI" id="CHEBI:30616"/>
    </ligand>
</feature>
<feature type="binding site" evidence="2">
    <location>
        <position position="1760"/>
    </location>
    <ligand>
        <name>ATP</name>
        <dbReference type="ChEBI" id="CHEBI:30616"/>
    </ligand>
</feature>
<reference key="1">
    <citation type="journal article" date="2002" name="Nature">
        <title>Sequence and analysis of chromosome 2 of Dictyostelium discoideum.</title>
        <authorList>
            <person name="Gloeckner G."/>
            <person name="Eichinger L."/>
            <person name="Szafranski K."/>
            <person name="Pachebat J.A."/>
            <person name="Bankier A.T."/>
            <person name="Dear P.H."/>
            <person name="Lehmann R."/>
            <person name="Baumgart C."/>
            <person name="Parra G."/>
            <person name="Abril J.F."/>
            <person name="Guigo R."/>
            <person name="Kumpf K."/>
            <person name="Tunggal B."/>
            <person name="Cox E.C."/>
            <person name="Quail M.A."/>
            <person name="Platzer M."/>
            <person name="Rosenthal A."/>
            <person name="Noegel A.A."/>
        </authorList>
    </citation>
    <scope>NUCLEOTIDE SEQUENCE [LARGE SCALE GENOMIC DNA]</scope>
    <source>
        <strain>AX4</strain>
    </source>
</reference>
<reference key="2">
    <citation type="journal article" date="2005" name="Nature">
        <title>The genome of the social amoeba Dictyostelium discoideum.</title>
        <authorList>
            <person name="Eichinger L."/>
            <person name="Pachebat J.A."/>
            <person name="Gloeckner G."/>
            <person name="Rajandream M.A."/>
            <person name="Sucgang R."/>
            <person name="Berriman M."/>
            <person name="Song J."/>
            <person name="Olsen R."/>
            <person name="Szafranski K."/>
            <person name="Xu Q."/>
            <person name="Tunggal B."/>
            <person name="Kummerfeld S."/>
            <person name="Madera M."/>
            <person name="Konfortov B.A."/>
            <person name="Rivero F."/>
            <person name="Bankier A.T."/>
            <person name="Lehmann R."/>
            <person name="Hamlin N."/>
            <person name="Davies R."/>
            <person name="Gaudet P."/>
            <person name="Fey P."/>
            <person name="Pilcher K."/>
            <person name="Chen G."/>
            <person name="Saunders D."/>
            <person name="Sodergren E.J."/>
            <person name="Davis P."/>
            <person name="Kerhornou A."/>
            <person name="Nie X."/>
            <person name="Hall N."/>
            <person name="Anjard C."/>
            <person name="Hemphill L."/>
            <person name="Bason N."/>
            <person name="Farbrother P."/>
            <person name="Desany B."/>
            <person name="Just E."/>
            <person name="Morio T."/>
            <person name="Rost R."/>
            <person name="Churcher C.M."/>
            <person name="Cooper J."/>
            <person name="Haydock S."/>
            <person name="van Driessche N."/>
            <person name="Cronin A."/>
            <person name="Goodhead I."/>
            <person name="Muzny D.M."/>
            <person name="Mourier T."/>
            <person name="Pain A."/>
            <person name="Lu M."/>
            <person name="Harper D."/>
            <person name="Lindsay R."/>
            <person name="Hauser H."/>
            <person name="James K.D."/>
            <person name="Quiles M."/>
            <person name="Madan Babu M."/>
            <person name="Saito T."/>
            <person name="Buchrieser C."/>
            <person name="Wardroper A."/>
            <person name="Felder M."/>
            <person name="Thangavelu M."/>
            <person name="Johnson D."/>
            <person name="Knights A."/>
            <person name="Loulseged H."/>
            <person name="Mungall K.L."/>
            <person name="Oliver K."/>
            <person name="Price C."/>
            <person name="Quail M.A."/>
            <person name="Urushihara H."/>
            <person name="Hernandez J."/>
            <person name="Rabbinowitsch E."/>
            <person name="Steffen D."/>
            <person name="Sanders M."/>
            <person name="Ma J."/>
            <person name="Kohara Y."/>
            <person name="Sharp S."/>
            <person name="Simmonds M.N."/>
            <person name="Spiegler S."/>
            <person name="Tivey A."/>
            <person name="Sugano S."/>
            <person name="White B."/>
            <person name="Walker D."/>
            <person name="Woodward J.R."/>
            <person name="Winckler T."/>
            <person name="Tanaka Y."/>
            <person name="Shaulsky G."/>
            <person name="Schleicher M."/>
            <person name="Weinstock G.M."/>
            <person name="Rosenthal A."/>
            <person name="Cox E.C."/>
            <person name="Chisholm R.L."/>
            <person name="Gibbs R.A."/>
            <person name="Loomis W.F."/>
            <person name="Platzer M."/>
            <person name="Kay R.R."/>
            <person name="Williams J.G."/>
            <person name="Dear P.H."/>
            <person name="Noegel A.A."/>
            <person name="Barrell B.G."/>
            <person name="Kuspa A."/>
        </authorList>
    </citation>
    <scope>NUCLEOTIDE SEQUENCE [LARGE SCALE GENOMIC DNA]</scope>
    <source>
        <strain>AX4</strain>
    </source>
</reference>
<gene>
    <name type="ORF">DDB_G0277071</name>
</gene>